<sequence>MLPLYPDISPEIIAIAIGSGAIGCTIVTDSLFWLVKQYCGATLNETFKYYTTATFIASVVALAGTFLLSFII</sequence>
<keyword id="KW-1185">Reference proteome</keyword>
<gene>
    <name type="primary">dsdX</name>
    <name type="ordered locus">SF2432</name>
    <name type="ordered locus">S2569</name>
</gene>
<comment type="caution">
    <text evidence="1">Could be the product of a pseudogene. This sequence is much shorter than E.coli K12 DsdX.</text>
</comment>
<evidence type="ECO:0000305" key="1"/>
<organism>
    <name type="scientific">Shigella flexneri</name>
    <dbReference type="NCBI Taxonomy" id="623"/>
    <lineage>
        <taxon>Bacteria</taxon>
        <taxon>Pseudomonadati</taxon>
        <taxon>Pseudomonadota</taxon>
        <taxon>Gammaproteobacteria</taxon>
        <taxon>Enterobacterales</taxon>
        <taxon>Enterobacteriaceae</taxon>
        <taxon>Shigella</taxon>
    </lineage>
</organism>
<dbReference type="EMBL" id="AE005674">
    <property type="protein sequence ID" value="AAN43943.1"/>
    <property type="molecule type" value="Genomic_DNA"/>
</dbReference>
<dbReference type="EMBL" id="AE014073">
    <property type="status" value="NOT_ANNOTATED_CDS"/>
    <property type="molecule type" value="Genomic_DNA"/>
</dbReference>
<dbReference type="RefSeq" id="NP_708236.1">
    <property type="nucleotide sequence ID" value="NC_004337.2"/>
</dbReference>
<dbReference type="STRING" id="198214.SF2432"/>
<dbReference type="PaxDb" id="198214-SF2432"/>
<dbReference type="GeneID" id="1025906"/>
<dbReference type="KEGG" id="sfl:SF2432"/>
<dbReference type="PATRIC" id="fig|198214.7.peg.2906"/>
<dbReference type="HOGENOM" id="CLU_027949_2_2_6"/>
<dbReference type="Proteomes" id="UP000001006">
    <property type="component" value="Chromosome"/>
</dbReference>
<dbReference type="Proteomes" id="UP000002673">
    <property type="component" value="Chromosome"/>
</dbReference>
<dbReference type="GO" id="GO:0005886">
    <property type="term" value="C:plasma membrane"/>
    <property type="evidence" value="ECO:0007669"/>
    <property type="project" value="TreeGrafter"/>
</dbReference>
<dbReference type="GO" id="GO:0015128">
    <property type="term" value="F:gluconate transmembrane transporter activity"/>
    <property type="evidence" value="ECO:0007669"/>
    <property type="project" value="InterPro"/>
</dbReference>
<dbReference type="InterPro" id="IPR003474">
    <property type="entry name" value="Glcn_transporter"/>
</dbReference>
<dbReference type="PANTHER" id="PTHR30354:SF6">
    <property type="entry name" value="D-SERINE TRANSPORTER DSDX"/>
    <property type="match status" value="1"/>
</dbReference>
<dbReference type="PANTHER" id="PTHR30354">
    <property type="entry name" value="GNT FAMILY GLUCONATE TRANSPORTER"/>
    <property type="match status" value="1"/>
</dbReference>
<dbReference type="Pfam" id="PF02447">
    <property type="entry name" value="GntP_permease"/>
    <property type="match status" value="1"/>
</dbReference>
<reference key="1">
    <citation type="journal article" date="2002" name="Nucleic Acids Res.">
        <title>Genome sequence of Shigella flexneri 2a: insights into pathogenicity through comparison with genomes of Escherichia coli K12 and O157.</title>
        <authorList>
            <person name="Jin Q."/>
            <person name="Yuan Z."/>
            <person name="Xu J."/>
            <person name="Wang Y."/>
            <person name="Shen Y."/>
            <person name="Lu W."/>
            <person name="Wang J."/>
            <person name="Liu H."/>
            <person name="Yang J."/>
            <person name="Yang F."/>
            <person name="Zhang X."/>
            <person name="Zhang J."/>
            <person name="Yang G."/>
            <person name="Wu H."/>
            <person name="Qu D."/>
            <person name="Dong J."/>
            <person name="Sun L."/>
            <person name="Xue Y."/>
            <person name="Zhao A."/>
            <person name="Gao Y."/>
            <person name="Zhu J."/>
            <person name="Kan B."/>
            <person name="Ding K."/>
            <person name="Chen S."/>
            <person name="Cheng H."/>
            <person name="Yao Z."/>
            <person name="He B."/>
            <person name="Chen R."/>
            <person name="Ma D."/>
            <person name="Qiang B."/>
            <person name="Wen Y."/>
            <person name="Hou Y."/>
            <person name="Yu J."/>
        </authorList>
    </citation>
    <scope>NUCLEOTIDE SEQUENCE [LARGE SCALE GENOMIC DNA]</scope>
    <source>
        <strain>301 / Serotype 2a</strain>
    </source>
</reference>
<reference key="2">
    <citation type="journal article" date="2003" name="Infect. Immun.">
        <title>Complete genome sequence and comparative genomics of Shigella flexneri serotype 2a strain 2457T.</title>
        <authorList>
            <person name="Wei J."/>
            <person name="Goldberg M.B."/>
            <person name="Burland V."/>
            <person name="Venkatesan M.M."/>
            <person name="Deng W."/>
            <person name="Fournier G."/>
            <person name="Mayhew G.F."/>
            <person name="Plunkett G. III"/>
            <person name="Rose D.J."/>
            <person name="Darling A."/>
            <person name="Mau B."/>
            <person name="Perna N.T."/>
            <person name="Payne S.M."/>
            <person name="Runyen-Janecky L.J."/>
            <person name="Zhou S."/>
            <person name="Schwartz D.C."/>
            <person name="Blattner F.R."/>
        </authorList>
    </citation>
    <scope>NUCLEOTIDE SEQUENCE [LARGE SCALE GENOMIC DNA]</scope>
    <source>
        <strain>ATCC 700930 / 2457T / Serotype 2a</strain>
    </source>
</reference>
<proteinExistence type="uncertain"/>
<protein>
    <recommendedName>
        <fullName>Putative D-serine transporter DsdX-like protein</fullName>
    </recommendedName>
</protein>
<accession>P0A3F7</accession>
<accession>Q8X4G3</accession>
<name>DSDX_SHIFL</name>
<feature type="chain" id="PRO_0000061939" description="Putative D-serine transporter DsdX-like protein">
    <location>
        <begin position="1"/>
        <end position="72"/>
    </location>
</feature>